<evidence type="ECO:0000250" key="1">
    <source>
        <dbReference type="UniProtKB" id="P39722"/>
    </source>
</evidence>
<evidence type="ECO:0000255" key="2"/>
<evidence type="ECO:0000255" key="3">
    <source>
        <dbReference type="PROSITE-ProRule" id="PRU00448"/>
    </source>
</evidence>
<evidence type="ECO:0000255" key="4">
    <source>
        <dbReference type="PROSITE-ProRule" id="PRU00757"/>
    </source>
</evidence>
<evidence type="ECO:0000256" key="5">
    <source>
        <dbReference type="SAM" id="MobiDB-lite"/>
    </source>
</evidence>
<evidence type="ECO:0000305" key="6"/>
<reference key="1">
    <citation type="journal article" date="2006" name="Nature">
        <title>Insights from the genome of the biotrophic fungal plant pathogen Ustilago maydis.</title>
        <authorList>
            <person name="Kaemper J."/>
            <person name="Kahmann R."/>
            <person name="Boelker M."/>
            <person name="Ma L.-J."/>
            <person name="Brefort T."/>
            <person name="Saville B.J."/>
            <person name="Banuett F."/>
            <person name="Kronstad J.W."/>
            <person name="Gold S.E."/>
            <person name="Mueller O."/>
            <person name="Perlin M.H."/>
            <person name="Woesten H.A.B."/>
            <person name="de Vries R."/>
            <person name="Ruiz-Herrera J."/>
            <person name="Reynaga-Pena C.G."/>
            <person name="Snetselaar K."/>
            <person name="McCann M."/>
            <person name="Perez-Martin J."/>
            <person name="Feldbruegge M."/>
            <person name="Basse C.W."/>
            <person name="Steinberg G."/>
            <person name="Ibeas J.I."/>
            <person name="Holloman W."/>
            <person name="Guzman P."/>
            <person name="Farman M.L."/>
            <person name="Stajich J.E."/>
            <person name="Sentandreu R."/>
            <person name="Gonzalez-Prieto J.M."/>
            <person name="Kennell J.C."/>
            <person name="Molina L."/>
            <person name="Schirawski J."/>
            <person name="Mendoza-Mendoza A."/>
            <person name="Greilinger D."/>
            <person name="Muench K."/>
            <person name="Roessel N."/>
            <person name="Scherer M."/>
            <person name="Vranes M."/>
            <person name="Ladendorf O."/>
            <person name="Vincon V."/>
            <person name="Fuchs U."/>
            <person name="Sandrock B."/>
            <person name="Meng S."/>
            <person name="Ho E.C.H."/>
            <person name="Cahill M.J."/>
            <person name="Boyce K.J."/>
            <person name="Klose J."/>
            <person name="Klosterman S.J."/>
            <person name="Deelstra H.J."/>
            <person name="Ortiz-Castellanos L."/>
            <person name="Li W."/>
            <person name="Sanchez-Alonso P."/>
            <person name="Schreier P.H."/>
            <person name="Haeuser-Hahn I."/>
            <person name="Vaupel M."/>
            <person name="Koopmann E."/>
            <person name="Friedrich G."/>
            <person name="Voss H."/>
            <person name="Schlueter T."/>
            <person name="Margolis J."/>
            <person name="Platt D."/>
            <person name="Swimmer C."/>
            <person name="Gnirke A."/>
            <person name="Chen F."/>
            <person name="Vysotskaia V."/>
            <person name="Mannhaupt G."/>
            <person name="Gueldener U."/>
            <person name="Muensterkoetter M."/>
            <person name="Haase D."/>
            <person name="Oesterheld M."/>
            <person name="Mewes H.-W."/>
            <person name="Mauceli E.W."/>
            <person name="DeCaprio D."/>
            <person name="Wade C.M."/>
            <person name="Butler J."/>
            <person name="Young S.K."/>
            <person name="Jaffe D.B."/>
            <person name="Calvo S.E."/>
            <person name="Nusbaum C."/>
            <person name="Galagan J.E."/>
            <person name="Birren B.W."/>
        </authorList>
    </citation>
    <scope>NUCLEOTIDE SEQUENCE [LARGE SCALE GENOMIC DNA]</scope>
    <source>
        <strain>DSM 14603 / FGSC 9021 / UM521</strain>
    </source>
</reference>
<reference key="2">
    <citation type="submission" date="2014-09" db="EMBL/GenBank/DDBJ databases">
        <authorList>
            <person name="Gueldener U."/>
            <person name="Muensterkoetter M."/>
            <person name="Walter M.C."/>
            <person name="Mannhaupt G."/>
            <person name="Kahmann R."/>
        </authorList>
    </citation>
    <scope>GENOME REANNOTATION</scope>
    <source>
        <strain>DSM 14603 / FGSC 9021 / UM521</strain>
    </source>
</reference>
<accession>Q4PB75</accession>
<accession>A0A0D1E4A5</accession>
<comment type="function">
    <text evidence="1">Mitochondrial GTPase involved in mitochondrial trafficking. Probably involved in control of anterograde transport of mitochondria and their subcellular distribution.</text>
</comment>
<comment type="subcellular location">
    <subcellularLocation>
        <location evidence="1">Mitochondrion outer membrane</location>
        <topology evidence="1">Single-pass type IV membrane protein</topology>
    </subcellularLocation>
</comment>
<comment type="similarity">
    <text evidence="4 6">Belongs to the mitochondrial Rho GTPase family.</text>
</comment>
<keyword id="KW-0106">Calcium</keyword>
<keyword id="KW-0342">GTP-binding</keyword>
<keyword id="KW-0378">Hydrolase</keyword>
<keyword id="KW-0472">Membrane</keyword>
<keyword id="KW-0479">Metal-binding</keyword>
<keyword id="KW-0496">Mitochondrion</keyword>
<keyword id="KW-1000">Mitochondrion outer membrane</keyword>
<keyword id="KW-0547">Nucleotide-binding</keyword>
<keyword id="KW-1185">Reference proteome</keyword>
<keyword id="KW-0677">Repeat</keyword>
<keyword id="KW-0812">Transmembrane</keyword>
<keyword id="KW-1133">Transmembrane helix</keyword>
<name>GEM1_MYCMD</name>
<protein>
    <recommendedName>
        <fullName>Mitochondrial Rho GTPase 1</fullName>
        <ecNumber>3.6.5.-</ecNumber>
    </recommendedName>
    <alternativeName>
        <fullName>GTPase EF-hand protein of mitochondria 1</fullName>
    </alternativeName>
</protein>
<dbReference type="EC" id="3.6.5.-"/>
<dbReference type="EMBL" id="CM003145">
    <property type="protein sequence ID" value="KIS69295.1"/>
    <property type="molecule type" value="Genomic_DNA"/>
</dbReference>
<dbReference type="RefSeq" id="XP_011389032.1">
    <property type="nucleotide sequence ID" value="XM_011390730.1"/>
</dbReference>
<dbReference type="SMR" id="Q4PB75"/>
<dbReference type="FunCoup" id="Q4PB75">
    <property type="interactions" value="321"/>
</dbReference>
<dbReference type="STRING" id="237631.Q4PB75"/>
<dbReference type="EnsemblFungi" id="KIS69295">
    <property type="protein sequence ID" value="KIS69295"/>
    <property type="gene ID" value="UMAG_02638"/>
</dbReference>
<dbReference type="GeneID" id="23563342"/>
<dbReference type="KEGG" id="uma:UMAG_02638"/>
<dbReference type="VEuPathDB" id="FungiDB:UMAG_02638"/>
<dbReference type="eggNOG" id="KOG1707">
    <property type="taxonomic scope" value="Eukaryota"/>
</dbReference>
<dbReference type="HOGENOM" id="CLU_014255_3_0_1"/>
<dbReference type="InParanoid" id="Q4PB75"/>
<dbReference type="OMA" id="HETTWGI"/>
<dbReference type="OrthoDB" id="10020961at2759"/>
<dbReference type="Proteomes" id="UP000000561">
    <property type="component" value="Chromosome 6"/>
</dbReference>
<dbReference type="GO" id="GO:0032865">
    <property type="term" value="C:ERMES complex"/>
    <property type="evidence" value="ECO:0007669"/>
    <property type="project" value="EnsemblFungi"/>
</dbReference>
<dbReference type="GO" id="GO:0005741">
    <property type="term" value="C:mitochondrial outer membrane"/>
    <property type="evidence" value="ECO:0000318"/>
    <property type="project" value="GO_Central"/>
</dbReference>
<dbReference type="GO" id="GO:0005509">
    <property type="term" value="F:calcium ion binding"/>
    <property type="evidence" value="ECO:0007669"/>
    <property type="project" value="EnsemblFungi"/>
</dbReference>
<dbReference type="GO" id="GO:0005525">
    <property type="term" value="F:GTP binding"/>
    <property type="evidence" value="ECO:0000318"/>
    <property type="project" value="GO_Central"/>
</dbReference>
<dbReference type="GO" id="GO:0003924">
    <property type="term" value="F:GTPase activity"/>
    <property type="evidence" value="ECO:0000318"/>
    <property type="project" value="GO_Central"/>
</dbReference>
<dbReference type="GO" id="GO:0015886">
    <property type="term" value="P:heme transport"/>
    <property type="evidence" value="ECO:0007669"/>
    <property type="project" value="EnsemblFungi"/>
</dbReference>
<dbReference type="GO" id="GO:0000001">
    <property type="term" value="P:mitochondrion inheritance"/>
    <property type="evidence" value="ECO:0007669"/>
    <property type="project" value="EnsemblFungi"/>
</dbReference>
<dbReference type="GO" id="GO:0007005">
    <property type="term" value="P:mitochondrion organization"/>
    <property type="evidence" value="ECO:0000318"/>
    <property type="project" value="GO_Central"/>
</dbReference>
<dbReference type="GO" id="GO:1990456">
    <property type="term" value="P:mitochondrion-endoplasmic reticulum membrane tethering"/>
    <property type="evidence" value="ECO:0007669"/>
    <property type="project" value="EnsemblFungi"/>
</dbReference>
<dbReference type="GO" id="GO:0055091">
    <property type="term" value="P:phospholipid homeostasis"/>
    <property type="evidence" value="ECO:0007669"/>
    <property type="project" value="EnsemblFungi"/>
</dbReference>
<dbReference type="GO" id="GO:0010821">
    <property type="term" value="P:regulation of mitochondrion organization"/>
    <property type="evidence" value="ECO:0007669"/>
    <property type="project" value="EnsemblFungi"/>
</dbReference>
<dbReference type="CDD" id="cd01893">
    <property type="entry name" value="Miro1"/>
    <property type="match status" value="1"/>
</dbReference>
<dbReference type="CDD" id="cd01892">
    <property type="entry name" value="Miro2"/>
    <property type="match status" value="1"/>
</dbReference>
<dbReference type="FunFam" id="3.40.50.300:FF:000553">
    <property type="entry name" value="Mitochondrial Rho GTPase"/>
    <property type="match status" value="1"/>
</dbReference>
<dbReference type="FunFam" id="1.10.238.10:FF:000474">
    <property type="entry name" value="Mitochondrial Rho GTPase 1"/>
    <property type="match status" value="1"/>
</dbReference>
<dbReference type="FunFam" id="3.40.50.300:FF:001330">
    <property type="entry name" value="Mitochondrial Rho GTPase 1"/>
    <property type="match status" value="1"/>
</dbReference>
<dbReference type="Gene3D" id="1.10.238.10">
    <property type="entry name" value="EF-hand"/>
    <property type="match status" value="2"/>
</dbReference>
<dbReference type="Gene3D" id="3.40.50.300">
    <property type="entry name" value="P-loop containing nucleotide triphosphate hydrolases"/>
    <property type="match status" value="2"/>
</dbReference>
<dbReference type="InterPro" id="IPR011992">
    <property type="entry name" value="EF-hand-dom_pair"/>
</dbReference>
<dbReference type="InterPro" id="IPR018247">
    <property type="entry name" value="EF_Hand_1_Ca_BS"/>
</dbReference>
<dbReference type="InterPro" id="IPR013566">
    <property type="entry name" value="EF_hand_assoc_1"/>
</dbReference>
<dbReference type="InterPro" id="IPR013567">
    <property type="entry name" value="EF_hand_assoc_2"/>
</dbReference>
<dbReference type="InterPro" id="IPR002048">
    <property type="entry name" value="EF_hand_dom"/>
</dbReference>
<dbReference type="InterPro" id="IPR052266">
    <property type="entry name" value="Miro-EF-hand_domain"/>
</dbReference>
<dbReference type="InterPro" id="IPR020860">
    <property type="entry name" value="MIRO_dom"/>
</dbReference>
<dbReference type="InterPro" id="IPR027417">
    <property type="entry name" value="P-loop_NTPase"/>
</dbReference>
<dbReference type="InterPro" id="IPR005225">
    <property type="entry name" value="Small_GTP-bd"/>
</dbReference>
<dbReference type="InterPro" id="IPR001806">
    <property type="entry name" value="Small_GTPase"/>
</dbReference>
<dbReference type="NCBIfam" id="TIGR00231">
    <property type="entry name" value="small_GTP"/>
    <property type="match status" value="1"/>
</dbReference>
<dbReference type="PANTHER" id="PTHR46819">
    <property type="entry name" value="EF-HAND CALCIUM-BINDING DOMAIN-CONTAINING PROTEIN 7"/>
    <property type="match status" value="1"/>
</dbReference>
<dbReference type="PANTHER" id="PTHR46819:SF1">
    <property type="entry name" value="EF-HAND CALCIUM-BINDING DOMAIN-CONTAINING PROTEIN 7"/>
    <property type="match status" value="1"/>
</dbReference>
<dbReference type="Pfam" id="PF08355">
    <property type="entry name" value="EF_assoc_1"/>
    <property type="match status" value="1"/>
</dbReference>
<dbReference type="Pfam" id="PF08356">
    <property type="entry name" value="EF_assoc_2"/>
    <property type="match status" value="1"/>
</dbReference>
<dbReference type="Pfam" id="PF00071">
    <property type="entry name" value="Ras"/>
    <property type="match status" value="2"/>
</dbReference>
<dbReference type="PRINTS" id="PR00449">
    <property type="entry name" value="RASTRNSFRMNG"/>
</dbReference>
<dbReference type="SMART" id="SM00054">
    <property type="entry name" value="EFh"/>
    <property type="match status" value="2"/>
</dbReference>
<dbReference type="SMART" id="SM00175">
    <property type="entry name" value="RAB"/>
    <property type="match status" value="1"/>
</dbReference>
<dbReference type="SMART" id="SM00173">
    <property type="entry name" value="RAS"/>
    <property type="match status" value="1"/>
</dbReference>
<dbReference type="SMART" id="SM00174">
    <property type="entry name" value="RHO"/>
    <property type="match status" value="1"/>
</dbReference>
<dbReference type="SUPFAM" id="SSF47473">
    <property type="entry name" value="EF-hand"/>
    <property type="match status" value="1"/>
</dbReference>
<dbReference type="SUPFAM" id="SSF52540">
    <property type="entry name" value="P-loop containing nucleoside triphosphate hydrolases"/>
    <property type="match status" value="2"/>
</dbReference>
<dbReference type="PROSITE" id="PS00018">
    <property type="entry name" value="EF_HAND_1"/>
    <property type="match status" value="2"/>
</dbReference>
<dbReference type="PROSITE" id="PS50222">
    <property type="entry name" value="EF_HAND_2"/>
    <property type="match status" value="2"/>
</dbReference>
<dbReference type="PROSITE" id="PS51423">
    <property type="entry name" value="MIRO"/>
    <property type="match status" value="2"/>
</dbReference>
<sequence length="752" mass="81962">MRKDVRIVLAGDPDVGKSTLITSLVKEAYVAKVQKVVPPITLPPEVAPEAVVTKIVDTSSSPEHRANLEAELRRANVICIVYSISAPSSFDRIPTYWLPYIRSLGVNVPVILVGNKIDLRSGDVTNAALEDELAPVMAEFKEVETCVECSARIPLNVSEVFYFAQKAVLYPTAPLYDSREHVLKPACVDALKRIFRLCDSDKDGLLSDGELNDFQRKCFDTPLQAQELEGIKDLVVQAPIAGLRYNHENSSVAASGSSANGDIPSHHPHLREGSLTMAGFLYLHTLFIQRGRLETTWTVLRTFGYGVDLSLQDSFVKPAFAVPPECSVELSPNGYQFLTDIFEVHDKDRDGALSEEELDSLFITAPDNRHPWQGTGFPTSTITDEHGAVTLQGWLAQWSMTTLLDHRTTLAYLAYLGYPSFPLSGSSGSASTPAPIPLTPTGPPGSRPSRNRTPCPPSTITALKLTRPRKTDKKKKGAIQRSVFLGFVLGAAGSGKTAILRNMVGKRFANAYEPTQKMMSVVSTVEQAGAERYLVLQEFGSRYEAEVLRNTAKLSAADVIVFVYDSSDTNSFSYISNLRQQYPLLQSMPSLFVATKADLDLAQQRHEVQPDTYCRKLGLKIPGLGAGPLNISIRDGQSADLYGLICTIAVDPKGAVQGGYDRNALSYGTNRWQFWGYIGLVVIGGGGAVWICAKVLKVPIGSTLGFGSSASTTSWWLSGAQARGAGGPNATKVSSWFDWIRWQSSSNVRSEL</sequence>
<feature type="chain" id="PRO_0000239340" description="Mitochondrial Rho GTPase 1">
    <location>
        <begin position="1"/>
        <end position="752"/>
    </location>
</feature>
<feature type="topological domain" description="Cytoplasmic" evidence="2">
    <location>
        <begin position="1"/>
        <end position="671"/>
    </location>
</feature>
<feature type="transmembrane region" description="Helical; Anchor for type IV membrane protein" evidence="2">
    <location>
        <begin position="672"/>
        <end position="692"/>
    </location>
</feature>
<feature type="topological domain" description="Mitochondrial intermembrane" evidence="2">
    <location>
        <begin position="693"/>
        <end position="752"/>
    </location>
</feature>
<feature type="domain" description="Miro 1" evidence="4">
    <location>
        <begin position="2"/>
        <end position="170"/>
    </location>
</feature>
<feature type="domain" description="EF-hand 1" evidence="3">
    <location>
        <begin position="186"/>
        <end position="221"/>
    </location>
</feature>
<feature type="domain" description="EF-hand 2" evidence="3">
    <location>
        <begin position="333"/>
        <end position="368"/>
    </location>
</feature>
<feature type="domain" description="Miro 2" evidence="4">
    <location>
        <begin position="481"/>
        <end position="651"/>
    </location>
</feature>
<feature type="region of interest" description="Disordered" evidence="5">
    <location>
        <begin position="426"/>
        <end position="460"/>
    </location>
</feature>
<feature type="compositionally biased region" description="Pro residues" evidence="5">
    <location>
        <begin position="434"/>
        <end position="446"/>
    </location>
</feature>
<feature type="binding site" evidence="2">
    <location>
        <begin position="11"/>
        <end position="18"/>
    </location>
    <ligand>
        <name>GTP</name>
        <dbReference type="ChEBI" id="CHEBI:37565"/>
        <label>1</label>
    </ligand>
</feature>
<feature type="binding site" evidence="2">
    <location>
        <begin position="57"/>
        <end position="61"/>
    </location>
    <ligand>
        <name>GTP</name>
        <dbReference type="ChEBI" id="CHEBI:37565"/>
        <label>1</label>
    </ligand>
</feature>
<feature type="binding site" evidence="2">
    <location>
        <begin position="115"/>
        <end position="118"/>
    </location>
    <ligand>
        <name>GTP</name>
        <dbReference type="ChEBI" id="CHEBI:37565"/>
        <label>1</label>
    </ligand>
</feature>
<feature type="binding site" evidence="3">
    <location>
        <position position="199"/>
    </location>
    <ligand>
        <name>Ca(2+)</name>
        <dbReference type="ChEBI" id="CHEBI:29108"/>
        <label>1</label>
    </ligand>
</feature>
<feature type="binding site" evidence="3">
    <location>
        <position position="201"/>
    </location>
    <ligand>
        <name>Ca(2+)</name>
        <dbReference type="ChEBI" id="CHEBI:29108"/>
        <label>1</label>
    </ligand>
</feature>
<feature type="binding site" evidence="3">
    <location>
        <position position="203"/>
    </location>
    <ligand>
        <name>Ca(2+)</name>
        <dbReference type="ChEBI" id="CHEBI:29108"/>
        <label>1</label>
    </ligand>
</feature>
<feature type="binding site" evidence="3">
    <location>
        <position position="210"/>
    </location>
    <ligand>
        <name>Ca(2+)</name>
        <dbReference type="ChEBI" id="CHEBI:29108"/>
        <label>1</label>
    </ligand>
</feature>
<feature type="binding site" evidence="3">
    <location>
        <position position="346"/>
    </location>
    <ligand>
        <name>Ca(2+)</name>
        <dbReference type="ChEBI" id="CHEBI:29108"/>
        <label>2</label>
    </ligand>
</feature>
<feature type="binding site" evidence="3">
    <location>
        <position position="348"/>
    </location>
    <ligand>
        <name>Ca(2+)</name>
        <dbReference type="ChEBI" id="CHEBI:29108"/>
        <label>2</label>
    </ligand>
</feature>
<feature type="binding site" evidence="3">
    <location>
        <position position="350"/>
    </location>
    <ligand>
        <name>Ca(2+)</name>
        <dbReference type="ChEBI" id="CHEBI:29108"/>
        <label>2</label>
    </ligand>
</feature>
<feature type="binding site" evidence="3">
    <location>
        <position position="357"/>
    </location>
    <ligand>
        <name>Ca(2+)</name>
        <dbReference type="ChEBI" id="CHEBI:29108"/>
        <label>2</label>
    </ligand>
</feature>
<feature type="binding site" evidence="2">
    <location>
        <begin position="490"/>
        <end position="497"/>
    </location>
    <ligand>
        <name>GTP</name>
        <dbReference type="ChEBI" id="CHEBI:37565"/>
        <label>2</label>
    </ligand>
</feature>
<feature type="binding site" evidence="2">
    <location>
        <begin position="526"/>
        <end position="530"/>
    </location>
    <ligand>
        <name>GTP</name>
        <dbReference type="ChEBI" id="CHEBI:37565"/>
        <label>2</label>
    </ligand>
</feature>
<feature type="binding site" evidence="2">
    <location>
        <begin position="595"/>
        <end position="598"/>
    </location>
    <ligand>
        <name>GTP</name>
        <dbReference type="ChEBI" id="CHEBI:37565"/>
        <label>2</label>
    </ligand>
</feature>
<proteinExistence type="inferred from homology"/>
<gene>
    <name type="primary">GEM1</name>
    <name type="ORF">UMAG_02638</name>
</gene>
<organism>
    <name type="scientific">Mycosarcoma maydis</name>
    <name type="common">Corn smut fungus</name>
    <name type="synonym">Ustilago maydis</name>
    <dbReference type="NCBI Taxonomy" id="5270"/>
    <lineage>
        <taxon>Eukaryota</taxon>
        <taxon>Fungi</taxon>
        <taxon>Dikarya</taxon>
        <taxon>Basidiomycota</taxon>
        <taxon>Ustilaginomycotina</taxon>
        <taxon>Ustilaginomycetes</taxon>
        <taxon>Ustilaginales</taxon>
        <taxon>Ustilaginaceae</taxon>
        <taxon>Mycosarcoma</taxon>
    </lineage>
</organism>